<gene>
    <name evidence="1" type="primary">NP</name>
</gene>
<feature type="chain" id="PRO_0000079069" description="Nucleoprotein">
    <location>
        <begin position="1"/>
        <end position="498"/>
    </location>
</feature>
<feature type="region of interest" description="Disordered" evidence="2">
    <location>
        <begin position="1"/>
        <end position="21"/>
    </location>
</feature>
<feature type="short sequence motif" description="Unconventional nuclear localization signal" evidence="1">
    <location>
        <begin position="1"/>
        <end position="18"/>
    </location>
</feature>
<feature type="short sequence motif" description="Bipartite nuclear localization signal" evidence="1">
    <location>
        <begin position="198"/>
        <end position="216"/>
    </location>
</feature>
<feature type="compositionally biased region" description="Basic and acidic residues" evidence="2">
    <location>
        <begin position="8"/>
        <end position="21"/>
    </location>
</feature>
<evidence type="ECO:0000255" key="1">
    <source>
        <dbReference type="HAMAP-Rule" id="MF_04070"/>
    </source>
</evidence>
<evidence type="ECO:0000256" key="2">
    <source>
        <dbReference type="SAM" id="MobiDB-lite"/>
    </source>
</evidence>
<accession>P16314</accession>
<protein>
    <recommendedName>
        <fullName evidence="1">Nucleoprotein</fullName>
    </recommendedName>
    <alternativeName>
        <fullName evidence="1">Nucleocapsid protein</fullName>
        <shortName evidence="1">Protein N</shortName>
    </alternativeName>
</protein>
<organism>
    <name type="scientific">Influenza A virus (strain A/Kiev/59/1979 H1N1)</name>
    <dbReference type="NCBI Taxonomy" id="384495"/>
    <lineage>
        <taxon>Viruses</taxon>
        <taxon>Riboviria</taxon>
        <taxon>Orthornavirae</taxon>
        <taxon>Negarnaviricota</taxon>
        <taxon>Polyploviricotina</taxon>
        <taxon>Insthoviricetes</taxon>
        <taxon>Articulavirales</taxon>
        <taxon>Orthomyxoviridae</taxon>
        <taxon>Alphainfluenzavirus</taxon>
        <taxon>Alphainfluenzavirus influenzae</taxon>
        <taxon>Influenza A virus</taxon>
    </lineage>
</organism>
<dbReference type="EMBL" id="X52262">
    <property type="protein sequence ID" value="CAA36505.1"/>
    <property type="molecule type" value="Genomic_RNA"/>
</dbReference>
<dbReference type="EMBL" id="X51972">
    <property type="protein sequence ID" value="CAA36234.1"/>
    <property type="molecule type" value="Genomic_RNA"/>
</dbReference>
<dbReference type="SMR" id="P16314"/>
<dbReference type="GO" id="GO:0019029">
    <property type="term" value="C:helical viral capsid"/>
    <property type="evidence" value="ECO:0007669"/>
    <property type="project" value="UniProtKB-UniRule"/>
</dbReference>
<dbReference type="GO" id="GO:0043657">
    <property type="term" value="C:host cell"/>
    <property type="evidence" value="ECO:0007669"/>
    <property type="project" value="GOC"/>
</dbReference>
<dbReference type="GO" id="GO:0042025">
    <property type="term" value="C:host cell nucleus"/>
    <property type="evidence" value="ECO:0007669"/>
    <property type="project" value="UniProtKB-SubCell"/>
</dbReference>
<dbReference type="GO" id="GO:1990904">
    <property type="term" value="C:ribonucleoprotein complex"/>
    <property type="evidence" value="ECO:0007669"/>
    <property type="project" value="UniProtKB-KW"/>
</dbReference>
<dbReference type="GO" id="GO:0019013">
    <property type="term" value="C:viral nucleocapsid"/>
    <property type="evidence" value="ECO:0007669"/>
    <property type="project" value="UniProtKB-UniRule"/>
</dbReference>
<dbReference type="GO" id="GO:0003723">
    <property type="term" value="F:RNA binding"/>
    <property type="evidence" value="ECO:0007669"/>
    <property type="project" value="UniProtKB-UniRule"/>
</dbReference>
<dbReference type="GO" id="GO:0005198">
    <property type="term" value="F:structural molecule activity"/>
    <property type="evidence" value="ECO:0007669"/>
    <property type="project" value="UniProtKB-UniRule"/>
</dbReference>
<dbReference type="GO" id="GO:0046718">
    <property type="term" value="P:symbiont entry into host cell"/>
    <property type="evidence" value="ECO:0007669"/>
    <property type="project" value="UniProtKB-KW"/>
</dbReference>
<dbReference type="GO" id="GO:0075732">
    <property type="term" value="P:viral penetration into host nucleus"/>
    <property type="evidence" value="ECO:0007669"/>
    <property type="project" value="UniProtKB-UniRule"/>
</dbReference>
<dbReference type="HAMAP" id="MF_04070">
    <property type="entry name" value="INFV_NCAP"/>
    <property type="match status" value="1"/>
</dbReference>
<dbReference type="InterPro" id="IPR002141">
    <property type="entry name" value="Flu_NP"/>
</dbReference>
<dbReference type="Pfam" id="PF00506">
    <property type="entry name" value="Flu_NP"/>
    <property type="match status" value="1"/>
</dbReference>
<dbReference type="SUPFAM" id="SSF161003">
    <property type="entry name" value="flu NP-like"/>
    <property type="match status" value="1"/>
</dbReference>
<keyword id="KW-0167">Capsid protein</keyword>
<keyword id="KW-1139">Helical capsid protein</keyword>
<keyword id="KW-1048">Host nucleus</keyword>
<keyword id="KW-0945">Host-virus interaction</keyword>
<keyword id="KW-0687">Ribonucleoprotein</keyword>
<keyword id="KW-0694">RNA-binding</keyword>
<keyword id="KW-0543">Viral nucleoprotein</keyword>
<keyword id="KW-1163">Viral penetration into host nucleus</keyword>
<keyword id="KW-0946">Virion</keyword>
<keyword id="KW-1160">Virus entry into host cell</keyword>
<reference key="1">
    <citation type="journal article" date="1986" name="Bioorg. Khim.">
        <title>Primary structure of the full-size DNA copy of the NP gene of influenza virus A/Kiev/59/79 (H1N1).</title>
        <authorList>
            <person name="Beklemishev A.B."/>
            <person name="Blinov V.M."/>
            <person name="Vasilenko S.K."/>
            <person name="Golovin S.Y."/>
            <person name="Karginov V.A."/>
            <person name="Mamayew L.V."/>
            <person name="Netesov S.V."/>
            <person name="Petrov N.A."/>
            <person name="Safronov P.F."/>
        </authorList>
    </citation>
    <scope>NUCLEOTIDE SEQUENCE [GENOMIC RNA]</scope>
</reference>
<comment type="function">
    <text evidence="1">Encapsidates the negative strand viral RNA, protecting it from nucleases. The encapsidated genomic RNA is termed the ribonucleoprotein (RNP) and serves as template for transcription and replication. The RNP needs to be localized in the host nucleus to start an infectious cycle, but is too large to diffuse through the nuclear pore complex. NP comprises at least 2 nuclear localization signals that are responsible for the active RNP import into the nucleus through cellular importin alpha/beta pathway. Later in the infection, nclear export of RNPs are mediated through viral proteins NEP interacting with M1 which binds nucleoproteins. It is possible that nucleoprotein binds directly host exportin-1/XPO1 and plays an active role in RNPs nuclear export. M1 interaction with RNP seems to hide nucleoprotein's nuclear localization signals. Soon after a virion infects a new cell, M1 dissociates from the RNP under acidification of the virion driven by M2 protein. Dissociation of M1 from RNP unmasks nucleoprotein's nuclear localization signals, targeting the RNP to the nucleus.</text>
</comment>
<comment type="subunit">
    <text evidence="1">Homomultimerizes to form the nucleocapsid. May bind host exportin-1/XPO1. Binds to viral genomic RNA. Protein-RNA contacts are mediated by a combination of electrostatic interactions between positively charged residues and the phosphate backbone and planar interactions between aromatic side chains and bases.</text>
</comment>
<comment type="subcellular location">
    <subcellularLocation>
        <location evidence="1">Virion</location>
    </subcellularLocation>
    <subcellularLocation>
        <location evidence="1">Host nucleus</location>
    </subcellularLocation>
</comment>
<comment type="PTM">
    <text evidence="1">Late in virus-infected cells, may be cleaved from a 56-kDa protein to a 53-kDa protein by a cellular caspase. This cleavage might be a marker for the onset of apoptosis in infected cells or have a specific function in virus host interaction.</text>
</comment>
<comment type="similarity">
    <text evidence="1">Belongs to the influenza viruses nucleoprotein family.</text>
</comment>
<organismHost>
    <name type="scientific">Aves</name>
    <dbReference type="NCBI Taxonomy" id="8782"/>
</organismHost>
<organismHost>
    <name type="scientific">Homo sapiens</name>
    <name type="common">Human</name>
    <dbReference type="NCBI Taxonomy" id="9606"/>
</organismHost>
<organismHost>
    <name type="scientific">Sus scrofa</name>
    <name type="common">Pig</name>
    <dbReference type="NCBI Taxonomy" id="9823"/>
</organismHost>
<name>NCAP_I79A4</name>
<proteinExistence type="inferred from homology"/>
<sequence>MASQGTKRSYEQMETDGERQNATEIRASVGKMIDGIGRFYIQMCTELKLSDYEGRLIQNSLTIERMVLSAFDERRNRYLEEHPSAGKDPKKTGGPIYKRVDRKWMRELILYDKEEIRRIWRQANNGDDATAGLTHMMIWHSNLNDTTYQRTRALVRTGMDPRMCSLMQGSTLPRRSGAAGAAVKGVGTMVMELIRMIKRGINDRNFWRGENGRKTRSAYERMCNILKGKFQTAAQRAMMDQVRESRNPGNAEIEDLIFLARSALILRGSVAHKSCLPACVYGPAVASGYDFEKEGYSLVGIDPFKLLQNSQVYSLIRPNENPAHKSQLVWMACHSAAFEDLRLLSFIRGTKVSPRGKLSTRGVQIASNENMDTMESSTLELRSRYWAIRTRSGGNTNQQRASAGQISVQPTFSVQRNLPFDKSTVMAAFTGNTEGRTSDMRAEIIRMMEDAKPEEVSFRGRGVFELSDEKATNPIVPSFDMSNEGSYFFGDNAEEYDN</sequence>